<gene>
    <name evidence="7" type="primary">Ppid</name>
</gene>
<evidence type="ECO:0000250" key="1"/>
<evidence type="ECO:0000250" key="2">
    <source>
        <dbReference type="UniProtKB" id="Q08752"/>
    </source>
</evidence>
<evidence type="ECO:0000255" key="3">
    <source>
        <dbReference type="PROSITE-ProRule" id="PRU00156"/>
    </source>
</evidence>
<evidence type="ECO:0000269" key="4">
    <source>
    </source>
</evidence>
<evidence type="ECO:0000269" key="5">
    <source>
    </source>
</evidence>
<evidence type="ECO:0000305" key="6"/>
<evidence type="ECO:0000312" key="7">
    <source>
        <dbReference type="MGI" id="MGI:1914988"/>
    </source>
</evidence>
<evidence type="ECO:0007744" key="8">
    <source>
    </source>
</evidence>
<sequence length="370" mass="40743">MSHASPAAKPSNSKNPRVFFDVDIGGERVGRIVLELFADIVPKTAENFRALCTGEKGTGSTTGKPLHFKGCPFHRIIKKFMIQGGDFSNQNGTGGESIYGEKFEDENFHYKHDREGLLSMANAGPNTNGSQFFITTVPTPHLDGKHVVFGQVIKGLGVARTLENVEVNGEKPAKLCVIAECGELKEGDDWGIFPKDGSGDSHPDFPEDADIDLKDVDKILLISEDLKNIGNTFFKSQNWEMAIKKYAKVLRYVDSSKAVIEKADRSRLQPIALSCVLNIGACKLKMSNWQGAIDSCLEALEMDPSNTKALYRKAQGWQGLKEYDQALADLKKAQEIAPGDKAIQAELLKVKQMIKAQKDKEKAVYAKMFA</sequence>
<comment type="function">
    <text evidence="2 4">PPIase that catalyzes the cis-trans isomerization of proline imidic peptide bonds in oligopeptides and may therefore assist protein folding. Proposed to act as a co-chaperone in HSP90 complexes such as in unligated steroid receptors heterocomplexes. Different co-chaperones seem to compete for association with HSP90 thus establishing distinct HSP90-co-chaperone-receptor complexes with the potential to exert tissue-specific receptor activity control. May have a preference for estrogen receptor complexes and is not found in glucocorticoid receptor complexes. May be involved in cytoplasmic dynein-dependent movement of the receptor from the cytoplasm to the nucleus. May regulate MYB by inhibiting its DNA-binding activity. Involved in regulation of AHR signaling by promoting the formation of the AHR:ARNT dimer; the function is independent of HSP90 but requires the chaperone activity region. Involved in regulation of UV radiation-induced apoptosis.</text>
</comment>
<comment type="catalytic activity">
    <reaction evidence="2">
        <text>[protein]-peptidylproline (omega=180) = [protein]-peptidylproline (omega=0)</text>
        <dbReference type="Rhea" id="RHEA:16237"/>
        <dbReference type="Rhea" id="RHEA-COMP:10747"/>
        <dbReference type="Rhea" id="RHEA-COMP:10748"/>
        <dbReference type="ChEBI" id="CHEBI:83833"/>
        <dbReference type="ChEBI" id="CHEBI:83834"/>
        <dbReference type="EC" id="5.2.1.8"/>
    </reaction>
</comment>
<comment type="activity regulation">
    <text evidence="2">Less sensitive to inhibition by cyclosporin A than is CYP-18.</text>
</comment>
<comment type="subunit">
    <text evidence="5">Identified in ESR1 or NR3C1/GCR steroid receptor-chaperone complexes. Found in HSP90 chaperone complexes with kinase clients LCK or EIF2AK1. Two monomers associate with one HSP90 homodimer. Interacts with HSP90AA1. Interacts with HSP90AB1; PPID and FKBP4 compete for binding to HSP90AB1 and the interaction is mutually exclusive with the PPID:HSPA8 interaction. Interacts with HSPA8; PPID and STIP1 but not FKBP4 compete for binding to HSPA8 and the interaction is mutually exclusive with the PPID:HSP90AB1 interaction. Interacts with S100A1 and S100A2; the interactions dissociate the PPID:HSP90AA1 interaction. Interacts with S100A6. Interacts with MYB, ILF2, XRCC6, RACK1 and RPS3. Interacts with cytoplasmic dynein 1 intermediate chain (DYNC1I1 or DYNC1I2).</text>
</comment>
<comment type="subcellular location">
    <subcellularLocation>
        <location evidence="2">Cytoplasm</location>
    </subcellularLocation>
    <subcellularLocation>
        <location evidence="2">Nucleus</location>
        <location evidence="2">Nucleolus</location>
    </subcellularLocation>
    <subcellularLocation>
        <location evidence="2">Nucleus</location>
        <location evidence="2">Nucleoplasm</location>
    </subcellularLocation>
</comment>
<comment type="similarity">
    <text evidence="6">Belongs to the cyclophilin-type PPIase family. PPIase D subfamily.</text>
</comment>
<comment type="caution">
    <text evidence="6">This protein should not be confused with mitochondrial peptidyl-prolyl cis-trans isomerase F (PPIF) which is often referred to as cyclophilin D or CypD.</text>
</comment>
<reference key="1">
    <citation type="journal article" date="2005" name="Science">
        <title>The transcriptional landscape of the mammalian genome.</title>
        <authorList>
            <person name="Carninci P."/>
            <person name="Kasukawa T."/>
            <person name="Katayama S."/>
            <person name="Gough J."/>
            <person name="Frith M.C."/>
            <person name="Maeda N."/>
            <person name="Oyama R."/>
            <person name="Ravasi T."/>
            <person name="Lenhard B."/>
            <person name="Wells C."/>
            <person name="Kodzius R."/>
            <person name="Shimokawa K."/>
            <person name="Bajic V.B."/>
            <person name="Brenner S.E."/>
            <person name="Batalov S."/>
            <person name="Forrest A.R."/>
            <person name="Zavolan M."/>
            <person name="Davis M.J."/>
            <person name="Wilming L.G."/>
            <person name="Aidinis V."/>
            <person name="Allen J.E."/>
            <person name="Ambesi-Impiombato A."/>
            <person name="Apweiler R."/>
            <person name="Aturaliya R.N."/>
            <person name="Bailey T.L."/>
            <person name="Bansal M."/>
            <person name="Baxter L."/>
            <person name="Beisel K.W."/>
            <person name="Bersano T."/>
            <person name="Bono H."/>
            <person name="Chalk A.M."/>
            <person name="Chiu K.P."/>
            <person name="Choudhary V."/>
            <person name="Christoffels A."/>
            <person name="Clutterbuck D.R."/>
            <person name="Crowe M.L."/>
            <person name="Dalla E."/>
            <person name="Dalrymple B.P."/>
            <person name="de Bono B."/>
            <person name="Della Gatta G."/>
            <person name="di Bernardo D."/>
            <person name="Down T."/>
            <person name="Engstrom P."/>
            <person name="Fagiolini M."/>
            <person name="Faulkner G."/>
            <person name="Fletcher C.F."/>
            <person name="Fukushima T."/>
            <person name="Furuno M."/>
            <person name="Futaki S."/>
            <person name="Gariboldi M."/>
            <person name="Georgii-Hemming P."/>
            <person name="Gingeras T.R."/>
            <person name="Gojobori T."/>
            <person name="Green R.E."/>
            <person name="Gustincich S."/>
            <person name="Harbers M."/>
            <person name="Hayashi Y."/>
            <person name="Hensch T.K."/>
            <person name="Hirokawa N."/>
            <person name="Hill D."/>
            <person name="Huminiecki L."/>
            <person name="Iacono M."/>
            <person name="Ikeo K."/>
            <person name="Iwama A."/>
            <person name="Ishikawa T."/>
            <person name="Jakt M."/>
            <person name="Kanapin A."/>
            <person name="Katoh M."/>
            <person name="Kawasawa Y."/>
            <person name="Kelso J."/>
            <person name="Kitamura H."/>
            <person name="Kitano H."/>
            <person name="Kollias G."/>
            <person name="Krishnan S.P."/>
            <person name="Kruger A."/>
            <person name="Kummerfeld S.K."/>
            <person name="Kurochkin I.V."/>
            <person name="Lareau L.F."/>
            <person name="Lazarevic D."/>
            <person name="Lipovich L."/>
            <person name="Liu J."/>
            <person name="Liuni S."/>
            <person name="McWilliam S."/>
            <person name="Madan Babu M."/>
            <person name="Madera M."/>
            <person name="Marchionni L."/>
            <person name="Matsuda H."/>
            <person name="Matsuzawa S."/>
            <person name="Miki H."/>
            <person name="Mignone F."/>
            <person name="Miyake S."/>
            <person name="Morris K."/>
            <person name="Mottagui-Tabar S."/>
            <person name="Mulder N."/>
            <person name="Nakano N."/>
            <person name="Nakauchi H."/>
            <person name="Ng P."/>
            <person name="Nilsson R."/>
            <person name="Nishiguchi S."/>
            <person name="Nishikawa S."/>
            <person name="Nori F."/>
            <person name="Ohara O."/>
            <person name="Okazaki Y."/>
            <person name="Orlando V."/>
            <person name="Pang K.C."/>
            <person name="Pavan W.J."/>
            <person name="Pavesi G."/>
            <person name="Pesole G."/>
            <person name="Petrovsky N."/>
            <person name="Piazza S."/>
            <person name="Reed J."/>
            <person name="Reid J.F."/>
            <person name="Ring B.Z."/>
            <person name="Ringwald M."/>
            <person name="Rost B."/>
            <person name="Ruan Y."/>
            <person name="Salzberg S.L."/>
            <person name="Sandelin A."/>
            <person name="Schneider C."/>
            <person name="Schoenbach C."/>
            <person name="Sekiguchi K."/>
            <person name="Semple C.A."/>
            <person name="Seno S."/>
            <person name="Sessa L."/>
            <person name="Sheng Y."/>
            <person name="Shibata Y."/>
            <person name="Shimada H."/>
            <person name="Shimada K."/>
            <person name="Silva D."/>
            <person name="Sinclair B."/>
            <person name="Sperling S."/>
            <person name="Stupka E."/>
            <person name="Sugiura K."/>
            <person name="Sultana R."/>
            <person name="Takenaka Y."/>
            <person name="Taki K."/>
            <person name="Tammoja K."/>
            <person name="Tan S.L."/>
            <person name="Tang S."/>
            <person name="Taylor M.S."/>
            <person name="Tegner J."/>
            <person name="Teichmann S.A."/>
            <person name="Ueda H.R."/>
            <person name="van Nimwegen E."/>
            <person name="Verardo R."/>
            <person name="Wei C.L."/>
            <person name="Yagi K."/>
            <person name="Yamanishi H."/>
            <person name="Zabarovsky E."/>
            <person name="Zhu S."/>
            <person name="Zimmer A."/>
            <person name="Hide W."/>
            <person name="Bult C."/>
            <person name="Grimmond S.M."/>
            <person name="Teasdale R.D."/>
            <person name="Liu E.T."/>
            <person name="Brusic V."/>
            <person name="Quackenbush J."/>
            <person name="Wahlestedt C."/>
            <person name="Mattick J.S."/>
            <person name="Hume D.A."/>
            <person name="Kai C."/>
            <person name="Sasaki D."/>
            <person name="Tomaru Y."/>
            <person name="Fukuda S."/>
            <person name="Kanamori-Katayama M."/>
            <person name="Suzuki M."/>
            <person name="Aoki J."/>
            <person name="Arakawa T."/>
            <person name="Iida J."/>
            <person name="Imamura K."/>
            <person name="Itoh M."/>
            <person name="Kato T."/>
            <person name="Kawaji H."/>
            <person name="Kawagashira N."/>
            <person name="Kawashima T."/>
            <person name="Kojima M."/>
            <person name="Kondo S."/>
            <person name="Konno H."/>
            <person name="Nakano K."/>
            <person name="Ninomiya N."/>
            <person name="Nishio T."/>
            <person name="Okada M."/>
            <person name="Plessy C."/>
            <person name="Shibata K."/>
            <person name="Shiraki T."/>
            <person name="Suzuki S."/>
            <person name="Tagami M."/>
            <person name="Waki K."/>
            <person name="Watahiki A."/>
            <person name="Okamura-Oho Y."/>
            <person name="Suzuki H."/>
            <person name="Kawai J."/>
            <person name="Hayashizaki Y."/>
        </authorList>
    </citation>
    <scope>NUCLEOTIDE SEQUENCE [LARGE SCALE MRNA]</scope>
    <source>
        <strain>C57BL/6J</strain>
        <tissue>Embryo</tissue>
        <tissue>Embryonic head</tissue>
        <tissue>Spinal ganglion</tissue>
    </source>
</reference>
<reference key="2">
    <citation type="journal article" date="2004" name="Genome Res.">
        <title>The status, quality, and expansion of the NIH full-length cDNA project: the Mammalian Gene Collection (MGC).</title>
        <authorList>
            <consortium name="The MGC Project Team"/>
        </authorList>
    </citation>
    <scope>NUCLEOTIDE SEQUENCE [LARGE SCALE MRNA]</scope>
    <source>
        <tissue>Mammary tumor</tissue>
    </source>
</reference>
<reference key="3">
    <citation type="submission" date="2009-01" db="UniProtKB">
        <authorList>
            <person name="Lubec G."/>
            <person name="Yang J.W."/>
            <person name="Zigmond M."/>
            <person name="Kang S.U."/>
            <person name="Sunyer B."/>
            <person name="Chen W.-Q."/>
        </authorList>
    </citation>
    <scope>PROTEIN SEQUENCE OF 18-28; 32-43 AND 219-227</scope>
    <scope>IDENTIFICATION BY MASS SPECTROMETRY</scope>
    <source>
        <strain>C57BL/6J</strain>
        <strain>OF1</strain>
        <tissue>Brain</tissue>
        <tissue>Hippocampus</tissue>
    </source>
</reference>
<reference key="4">
    <citation type="journal article" date="1997" name="J. Biol. Chem.">
        <title>Protein phosphatase 5 is a major component of glucocorticoid receptor.hsp90 complexes with properties of an FK506-binding immunophilin.</title>
        <authorList>
            <person name="Silverstein A.M."/>
            <person name="Galigniana M.D."/>
            <person name="Chen M.S."/>
            <person name="Owens-Grillo J.K."/>
            <person name="Chinkers M."/>
            <person name="Pratt W.B."/>
        </authorList>
    </citation>
    <scope>IDENTIFICATION IN A COMPLEX WITH HSP90AA1 AND NR3C1</scope>
</reference>
<reference key="5">
    <citation type="journal article" date="2008" name="Biochemistry">
        <title>Control of glucocorticoid and progesterone receptor subcellular localization by the ligand-binding domain is mediated by distinct interactions with tetratricopeptide repeat proteins.</title>
        <authorList>
            <person name="Banerjee A."/>
            <person name="Periyasamy S."/>
            <person name="Wolf I.M."/>
            <person name="Hinds T.D. Jr."/>
            <person name="Yong W."/>
            <person name="Shou W."/>
            <person name="Sanchez E.R."/>
        </authorList>
    </citation>
    <scope>FUNCTION</scope>
</reference>
<reference key="6">
    <citation type="journal article" date="2010" name="Cell">
        <title>A tissue-specific atlas of mouse protein phosphorylation and expression.</title>
        <authorList>
            <person name="Huttlin E.L."/>
            <person name="Jedrychowski M.P."/>
            <person name="Elias J.E."/>
            <person name="Goswami T."/>
            <person name="Rad R."/>
            <person name="Beausoleil S.A."/>
            <person name="Villen J."/>
            <person name="Haas W."/>
            <person name="Sowa M.E."/>
            <person name="Gygi S.P."/>
        </authorList>
    </citation>
    <scope>IDENTIFICATION BY MASS SPECTROMETRY [LARGE SCALE ANALYSIS]</scope>
    <source>
        <tissue>Brain</tissue>
        <tissue>Brown adipose tissue</tissue>
        <tissue>Heart</tissue>
        <tissue>Kidney</tissue>
        <tissue>Liver</tissue>
        <tissue>Lung</tissue>
        <tissue>Pancreas</tissue>
        <tissue>Spleen</tissue>
        <tissue>Testis</tissue>
    </source>
</reference>
<reference key="7">
    <citation type="journal article" date="2013" name="Mol. Cell">
        <title>SIRT5-mediated lysine desuccinylation impacts diverse metabolic pathways.</title>
        <authorList>
            <person name="Park J."/>
            <person name="Chen Y."/>
            <person name="Tishkoff D.X."/>
            <person name="Peng C."/>
            <person name="Tan M."/>
            <person name="Dai L."/>
            <person name="Xie Z."/>
            <person name="Zhang Y."/>
            <person name="Zwaans B.M."/>
            <person name="Skinner M.E."/>
            <person name="Lombard D.B."/>
            <person name="Zhao Y."/>
        </authorList>
    </citation>
    <scope>ACETYLATION [LARGE SCALE ANALYSIS] AT LYS-171</scope>
    <scope>IDENTIFICATION BY MASS SPECTROMETRY [LARGE SCALE ANALYSIS]</scope>
    <source>
        <tissue>Embryonic fibroblast</tissue>
    </source>
</reference>
<accession>Q9CR16</accession>
<accession>Q543G1</accession>
<organism>
    <name type="scientific">Mus musculus</name>
    <name type="common">Mouse</name>
    <dbReference type="NCBI Taxonomy" id="10090"/>
    <lineage>
        <taxon>Eukaryota</taxon>
        <taxon>Metazoa</taxon>
        <taxon>Chordata</taxon>
        <taxon>Craniata</taxon>
        <taxon>Vertebrata</taxon>
        <taxon>Euteleostomi</taxon>
        <taxon>Mammalia</taxon>
        <taxon>Eutheria</taxon>
        <taxon>Euarchontoglires</taxon>
        <taxon>Glires</taxon>
        <taxon>Rodentia</taxon>
        <taxon>Myomorpha</taxon>
        <taxon>Muroidea</taxon>
        <taxon>Muridae</taxon>
        <taxon>Murinae</taxon>
        <taxon>Mus</taxon>
        <taxon>Mus</taxon>
    </lineage>
</organism>
<dbReference type="EC" id="5.2.1.8" evidence="2"/>
<dbReference type="EMBL" id="AK003402">
    <property type="protein sequence ID" value="BAB22767.1"/>
    <property type="molecule type" value="mRNA"/>
</dbReference>
<dbReference type="EMBL" id="AK013919">
    <property type="protein sequence ID" value="BAB29056.1"/>
    <property type="molecule type" value="mRNA"/>
</dbReference>
<dbReference type="EMBL" id="AK051597">
    <property type="protein sequence ID" value="BAC34686.1"/>
    <property type="molecule type" value="mRNA"/>
</dbReference>
<dbReference type="EMBL" id="BC011499">
    <property type="protein sequence ID" value="AAH11499.1"/>
    <property type="molecule type" value="mRNA"/>
</dbReference>
<dbReference type="EMBL" id="BC019778">
    <property type="protein sequence ID" value="AAH19778.1"/>
    <property type="molecule type" value="mRNA"/>
</dbReference>
<dbReference type="CCDS" id="CCDS17417.1"/>
<dbReference type="RefSeq" id="NP_080628.1">
    <property type="nucleotide sequence ID" value="NM_026352.5"/>
</dbReference>
<dbReference type="SMR" id="Q9CR16"/>
<dbReference type="BioGRID" id="212408">
    <property type="interactions" value="20"/>
</dbReference>
<dbReference type="FunCoup" id="Q9CR16">
    <property type="interactions" value="4727"/>
</dbReference>
<dbReference type="IntAct" id="Q9CR16">
    <property type="interactions" value="3"/>
</dbReference>
<dbReference type="STRING" id="10090.ENSMUSP00000029382"/>
<dbReference type="iPTMnet" id="Q9CR16"/>
<dbReference type="PhosphoSitePlus" id="Q9CR16"/>
<dbReference type="SwissPalm" id="Q9CR16"/>
<dbReference type="REPRODUCTION-2DPAGE" id="Q9CR16"/>
<dbReference type="jPOST" id="Q9CR16"/>
<dbReference type="PaxDb" id="10090-ENSMUSP00000029382"/>
<dbReference type="PeptideAtlas" id="Q9CR16"/>
<dbReference type="ProteomicsDB" id="291832"/>
<dbReference type="Pumba" id="Q9CR16"/>
<dbReference type="Antibodypedia" id="16935">
    <property type="antibodies" value="372 antibodies from 36 providers"/>
</dbReference>
<dbReference type="DNASU" id="67738"/>
<dbReference type="Ensembl" id="ENSMUST00000029382.13">
    <property type="protein sequence ID" value="ENSMUSP00000029382.8"/>
    <property type="gene ID" value="ENSMUSG00000027804.14"/>
</dbReference>
<dbReference type="GeneID" id="67738"/>
<dbReference type="KEGG" id="mmu:67738"/>
<dbReference type="UCSC" id="uc008pnp.1">
    <property type="organism name" value="mouse"/>
</dbReference>
<dbReference type="AGR" id="MGI:1914988"/>
<dbReference type="CTD" id="5481"/>
<dbReference type="MGI" id="MGI:1914988">
    <property type="gene designation" value="Ppid"/>
</dbReference>
<dbReference type="VEuPathDB" id="HostDB:ENSMUSG00000027804"/>
<dbReference type="eggNOG" id="KOG0546">
    <property type="taxonomic scope" value="Eukaryota"/>
</dbReference>
<dbReference type="GeneTree" id="ENSGT00940000154672"/>
<dbReference type="HOGENOM" id="CLU_012062_37_1_1"/>
<dbReference type="InParanoid" id="Q9CR16"/>
<dbReference type="OMA" id="EMEQNCN"/>
<dbReference type="OrthoDB" id="407558at2759"/>
<dbReference type="PhylomeDB" id="Q9CR16"/>
<dbReference type="TreeFam" id="TF324493"/>
<dbReference type="BioGRID-ORCS" id="67738">
    <property type="hits" value="1 hit in 77 CRISPR screens"/>
</dbReference>
<dbReference type="CD-CODE" id="CE726F99">
    <property type="entry name" value="Postsynaptic density"/>
</dbReference>
<dbReference type="ChiTaRS" id="Ppid">
    <property type="organism name" value="mouse"/>
</dbReference>
<dbReference type="PRO" id="PR:Q9CR16"/>
<dbReference type="Proteomes" id="UP000000589">
    <property type="component" value="Chromosome 3"/>
</dbReference>
<dbReference type="RNAct" id="Q9CR16">
    <property type="molecule type" value="protein"/>
</dbReference>
<dbReference type="Bgee" id="ENSMUSG00000027804">
    <property type="expression patterns" value="Expressed in embryonic post-anal tail and 125 other cell types or tissues"/>
</dbReference>
<dbReference type="ExpressionAtlas" id="Q9CR16">
    <property type="expression patterns" value="baseline and differential"/>
</dbReference>
<dbReference type="GO" id="GO:0005929">
    <property type="term" value="C:cilium"/>
    <property type="evidence" value="ECO:0007669"/>
    <property type="project" value="Ensembl"/>
</dbReference>
<dbReference type="GO" id="GO:0005737">
    <property type="term" value="C:cytoplasm"/>
    <property type="evidence" value="ECO:0000250"/>
    <property type="project" value="UniProtKB"/>
</dbReference>
<dbReference type="GO" id="GO:0005829">
    <property type="term" value="C:cytosol"/>
    <property type="evidence" value="ECO:0007669"/>
    <property type="project" value="Ensembl"/>
</dbReference>
<dbReference type="GO" id="GO:0005730">
    <property type="term" value="C:nucleolus"/>
    <property type="evidence" value="ECO:0000250"/>
    <property type="project" value="UniProtKB"/>
</dbReference>
<dbReference type="GO" id="GO:0005654">
    <property type="term" value="C:nucleoplasm"/>
    <property type="evidence" value="ECO:0007669"/>
    <property type="project" value="UniProtKB-SubCell"/>
</dbReference>
<dbReference type="GO" id="GO:0005634">
    <property type="term" value="C:nucleus"/>
    <property type="evidence" value="ECO:0000250"/>
    <property type="project" value="UniProtKB"/>
</dbReference>
<dbReference type="GO" id="GO:0005528">
    <property type="term" value="F:FK506 binding"/>
    <property type="evidence" value="ECO:0000304"/>
    <property type="project" value="MGI"/>
</dbReference>
<dbReference type="GO" id="GO:0030544">
    <property type="term" value="F:Hsp70 protein binding"/>
    <property type="evidence" value="ECO:0000250"/>
    <property type="project" value="UniProtKB"/>
</dbReference>
<dbReference type="GO" id="GO:0051879">
    <property type="term" value="F:Hsp90 protein binding"/>
    <property type="evidence" value="ECO:0000250"/>
    <property type="project" value="UniProtKB"/>
</dbReference>
<dbReference type="GO" id="GO:0030331">
    <property type="term" value="F:nuclear estrogen receptor binding"/>
    <property type="evidence" value="ECO:0000250"/>
    <property type="project" value="UniProtKB"/>
</dbReference>
<dbReference type="GO" id="GO:0003755">
    <property type="term" value="F:peptidyl-prolyl cis-trans isomerase activity"/>
    <property type="evidence" value="ECO:0000250"/>
    <property type="project" value="UniProtKB"/>
</dbReference>
<dbReference type="GO" id="GO:0008134">
    <property type="term" value="F:transcription factor binding"/>
    <property type="evidence" value="ECO:0000250"/>
    <property type="project" value="UniProtKB"/>
</dbReference>
<dbReference type="GO" id="GO:0006915">
    <property type="term" value="P:apoptotic process"/>
    <property type="evidence" value="ECO:0007669"/>
    <property type="project" value="UniProtKB-KW"/>
</dbReference>
<dbReference type="GO" id="GO:0071492">
    <property type="term" value="P:cellular response to UV-A"/>
    <property type="evidence" value="ECO:0000250"/>
    <property type="project" value="UniProtKB"/>
</dbReference>
<dbReference type="GO" id="GO:0061077">
    <property type="term" value="P:chaperone-mediated protein folding"/>
    <property type="evidence" value="ECO:0000250"/>
    <property type="project" value="UniProtKB"/>
</dbReference>
<dbReference type="GO" id="GO:0034389">
    <property type="term" value="P:lipid droplet organization"/>
    <property type="evidence" value="ECO:0000250"/>
    <property type="project" value="UniProtKB"/>
</dbReference>
<dbReference type="GO" id="GO:0000122">
    <property type="term" value="P:negative regulation of transcription by RNA polymerase II"/>
    <property type="evidence" value="ECO:0000250"/>
    <property type="project" value="UniProtKB"/>
</dbReference>
<dbReference type="GO" id="GO:0043065">
    <property type="term" value="P:positive regulation of apoptotic process"/>
    <property type="evidence" value="ECO:0000250"/>
    <property type="project" value="UniProtKB"/>
</dbReference>
<dbReference type="GO" id="GO:0050714">
    <property type="term" value="P:positive regulation of protein secretion"/>
    <property type="evidence" value="ECO:0007669"/>
    <property type="project" value="Ensembl"/>
</dbReference>
<dbReference type="GO" id="GO:0045070">
    <property type="term" value="P:positive regulation of viral genome replication"/>
    <property type="evidence" value="ECO:0007669"/>
    <property type="project" value="Ensembl"/>
</dbReference>
<dbReference type="GO" id="GO:0006457">
    <property type="term" value="P:protein folding"/>
    <property type="evidence" value="ECO:0000250"/>
    <property type="project" value="UniProtKB"/>
</dbReference>
<dbReference type="GO" id="GO:0015031">
    <property type="term" value="P:protein transport"/>
    <property type="evidence" value="ECO:0007669"/>
    <property type="project" value="UniProtKB-KW"/>
</dbReference>
<dbReference type="GO" id="GO:0065003">
    <property type="term" value="P:protein-containing complex assembly"/>
    <property type="evidence" value="ECO:0000250"/>
    <property type="project" value="UniProtKB"/>
</dbReference>
<dbReference type="CDD" id="cd01926">
    <property type="entry name" value="cyclophilin_ABH_like"/>
    <property type="match status" value="1"/>
</dbReference>
<dbReference type="FunFam" id="2.40.100.10:FF:000009">
    <property type="entry name" value="Peptidyl-prolyl cis-trans isomerase D"/>
    <property type="match status" value="1"/>
</dbReference>
<dbReference type="FunFam" id="1.25.40.10:FF:000029">
    <property type="entry name" value="peptidyl-prolyl cis-trans isomerase D"/>
    <property type="match status" value="1"/>
</dbReference>
<dbReference type="Gene3D" id="2.40.100.10">
    <property type="entry name" value="Cyclophilin-like"/>
    <property type="match status" value="1"/>
</dbReference>
<dbReference type="Gene3D" id="1.25.40.10">
    <property type="entry name" value="Tetratricopeptide repeat domain"/>
    <property type="match status" value="1"/>
</dbReference>
<dbReference type="InterPro" id="IPR029000">
    <property type="entry name" value="Cyclophilin-like_dom_sf"/>
</dbReference>
<dbReference type="InterPro" id="IPR020892">
    <property type="entry name" value="Cyclophilin-type_PPIase_CS"/>
</dbReference>
<dbReference type="InterPro" id="IPR002130">
    <property type="entry name" value="Cyclophilin-type_PPIase_dom"/>
</dbReference>
<dbReference type="InterPro" id="IPR011990">
    <property type="entry name" value="TPR-like_helical_dom_sf"/>
</dbReference>
<dbReference type="InterPro" id="IPR019734">
    <property type="entry name" value="TPR_rpt"/>
</dbReference>
<dbReference type="PANTHER" id="PTHR11071">
    <property type="entry name" value="PEPTIDYL-PROLYL CIS-TRANS ISOMERASE"/>
    <property type="match status" value="1"/>
</dbReference>
<dbReference type="PANTHER" id="PTHR11071:SF561">
    <property type="entry name" value="PEPTIDYL-PROLYL CIS-TRANS ISOMERASE D-RELATED"/>
    <property type="match status" value="1"/>
</dbReference>
<dbReference type="Pfam" id="PF00160">
    <property type="entry name" value="Pro_isomerase"/>
    <property type="match status" value="1"/>
</dbReference>
<dbReference type="PRINTS" id="PR00153">
    <property type="entry name" value="CSAPPISMRASE"/>
</dbReference>
<dbReference type="SMART" id="SM00028">
    <property type="entry name" value="TPR"/>
    <property type="match status" value="3"/>
</dbReference>
<dbReference type="SUPFAM" id="SSF50891">
    <property type="entry name" value="Cyclophilin-like"/>
    <property type="match status" value="1"/>
</dbReference>
<dbReference type="SUPFAM" id="SSF48452">
    <property type="entry name" value="TPR-like"/>
    <property type="match status" value="1"/>
</dbReference>
<dbReference type="PROSITE" id="PS00170">
    <property type="entry name" value="CSA_PPIASE_1"/>
    <property type="match status" value="1"/>
</dbReference>
<dbReference type="PROSITE" id="PS50072">
    <property type="entry name" value="CSA_PPIASE_2"/>
    <property type="match status" value="1"/>
</dbReference>
<dbReference type="PROSITE" id="PS50005">
    <property type="entry name" value="TPR"/>
    <property type="match status" value="3"/>
</dbReference>
<dbReference type="PROSITE" id="PS50293">
    <property type="entry name" value="TPR_REGION"/>
    <property type="match status" value="2"/>
</dbReference>
<keyword id="KW-0007">Acetylation</keyword>
<keyword id="KW-0053">Apoptosis</keyword>
<keyword id="KW-0143">Chaperone</keyword>
<keyword id="KW-0963">Cytoplasm</keyword>
<keyword id="KW-0903">Direct protein sequencing</keyword>
<keyword id="KW-0413">Isomerase</keyword>
<keyword id="KW-0539">Nucleus</keyword>
<keyword id="KW-0597">Phosphoprotein</keyword>
<keyword id="KW-0653">Protein transport</keyword>
<keyword id="KW-1185">Reference proteome</keyword>
<keyword id="KW-0677">Repeat</keyword>
<keyword id="KW-0697">Rotamase</keyword>
<keyword id="KW-0802">TPR repeat</keyword>
<keyword id="KW-0813">Transport</keyword>
<name>PPID_MOUSE</name>
<feature type="chain" id="PRO_0000064154" description="Peptidyl-prolyl cis-trans isomerase D">
    <location>
        <begin position="1"/>
        <end position="370"/>
    </location>
</feature>
<feature type="domain" description="PPIase cyclophilin-type" evidence="3">
    <location>
        <begin position="19"/>
        <end position="183"/>
    </location>
</feature>
<feature type="repeat" description="TPR 1">
    <location>
        <begin position="223"/>
        <end position="256"/>
    </location>
</feature>
<feature type="repeat" description="TPR 2">
    <location>
        <begin position="273"/>
        <end position="306"/>
    </location>
</feature>
<feature type="repeat" description="TPR 3">
    <location>
        <begin position="307"/>
        <end position="340"/>
    </location>
</feature>
<feature type="region of interest" description="Chaperone activity" evidence="1">
    <location>
        <begin position="185"/>
        <end position="215"/>
    </location>
</feature>
<feature type="region of interest" description="Interaction with HSP90AB1" evidence="1">
    <location>
        <begin position="214"/>
        <end position="370"/>
    </location>
</feature>
<feature type="modified residue" description="Phosphoserine" evidence="2">
    <location>
        <position position="5"/>
    </location>
</feature>
<feature type="modified residue" description="N6-acetyllysine" evidence="8">
    <location>
        <position position="171"/>
    </location>
</feature>
<feature type="modified residue" description="Phosphoserine" evidence="2">
    <location>
        <position position="198"/>
    </location>
</feature>
<proteinExistence type="evidence at protein level"/>
<protein>
    <recommendedName>
        <fullName evidence="2">Peptidyl-prolyl cis-trans isomerase D</fullName>
        <shortName evidence="2">PPIase D</shortName>
        <ecNumber evidence="2">5.2.1.8</ecNumber>
    </recommendedName>
    <alternativeName>
        <fullName>40 kDa peptidyl-prolyl cis-trans isomerase</fullName>
    </alternativeName>
    <alternativeName>
        <fullName evidence="2">Cyclophilin-40</fullName>
        <shortName evidence="2">CYP-40</shortName>
    </alternativeName>
    <alternativeName>
        <fullName evidence="2">Rotamase D</fullName>
    </alternativeName>
</protein>